<name>TA2R_RAT</name>
<keyword id="KW-1003">Cell membrane</keyword>
<keyword id="KW-1015">Disulfide bond</keyword>
<keyword id="KW-0297">G-protein coupled receptor</keyword>
<keyword id="KW-0325">Glycoprotein</keyword>
<keyword id="KW-0472">Membrane</keyword>
<keyword id="KW-0597">Phosphoprotein</keyword>
<keyword id="KW-0675">Receptor</keyword>
<keyword id="KW-1185">Reference proteome</keyword>
<keyword id="KW-0807">Transducer</keyword>
<keyword id="KW-0812">Transmembrane</keyword>
<keyword id="KW-1133">Transmembrane helix</keyword>
<accession>P34978</accession>
<dbReference type="EMBL" id="D21158">
    <property type="protein sequence ID" value="BAA04694.1"/>
    <property type="molecule type" value="mRNA"/>
</dbReference>
<dbReference type="EMBL" id="D32080">
    <property type="protein sequence ID" value="BAA06844.1"/>
    <property type="molecule type" value="mRNA"/>
</dbReference>
<dbReference type="PIR" id="I55623">
    <property type="entry name" value="I55623"/>
</dbReference>
<dbReference type="RefSeq" id="NP_058750.2">
    <property type="nucleotide sequence ID" value="NM_017054.2"/>
</dbReference>
<dbReference type="RefSeq" id="XP_006240908.1">
    <property type="nucleotide sequence ID" value="XM_006240846.4"/>
</dbReference>
<dbReference type="RefSeq" id="XP_063119069.1">
    <property type="nucleotide sequence ID" value="XM_063262999.1"/>
</dbReference>
<dbReference type="RefSeq" id="XP_063119070.1">
    <property type="nucleotide sequence ID" value="XM_063263000.1"/>
</dbReference>
<dbReference type="SMR" id="P34978"/>
<dbReference type="CORUM" id="P34978"/>
<dbReference type="DIP" id="DIP-60433N"/>
<dbReference type="FunCoup" id="P34978">
    <property type="interactions" value="200"/>
</dbReference>
<dbReference type="IntAct" id="P34978">
    <property type="interactions" value="1"/>
</dbReference>
<dbReference type="STRING" id="10116.ENSRNOP00000027932"/>
<dbReference type="BindingDB" id="P34978"/>
<dbReference type="ChEMBL" id="CHEMBL3156"/>
<dbReference type="GuidetoPHARMACOLOGY" id="346"/>
<dbReference type="GlyCosmos" id="P34978">
    <property type="glycosylation" value="2 sites, No reported glycans"/>
</dbReference>
<dbReference type="GlyGen" id="P34978">
    <property type="glycosylation" value="2 sites"/>
</dbReference>
<dbReference type="PhosphoSitePlus" id="P34978"/>
<dbReference type="PaxDb" id="10116-ENSRNOP00000027932"/>
<dbReference type="Ensembl" id="ENSRNOT00000027932.5">
    <property type="protein sequence ID" value="ENSRNOP00000027932.2"/>
    <property type="gene ID" value="ENSRNOG00000020585.7"/>
</dbReference>
<dbReference type="GeneID" id="24816"/>
<dbReference type="KEGG" id="rno:24816"/>
<dbReference type="UCSC" id="RGD:3825">
    <property type="organism name" value="rat"/>
</dbReference>
<dbReference type="AGR" id="RGD:3825"/>
<dbReference type="CTD" id="6915"/>
<dbReference type="RGD" id="3825">
    <property type="gene designation" value="Tbxa2r"/>
</dbReference>
<dbReference type="eggNOG" id="KOG3656">
    <property type="taxonomic scope" value="Eukaryota"/>
</dbReference>
<dbReference type="GeneTree" id="ENSGT01030000234559"/>
<dbReference type="HOGENOM" id="CLU_045991_3_0_1"/>
<dbReference type="InParanoid" id="P34978"/>
<dbReference type="OMA" id="HAILFDW"/>
<dbReference type="OrthoDB" id="8631411at2759"/>
<dbReference type="PhylomeDB" id="P34978"/>
<dbReference type="TreeFam" id="TF324982"/>
<dbReference type="Reactome" id="R-RNO-391908">
    <property type="pathway name" value="Prostanoid ligand receptors"/>
</dbReference>
<dbReference type="Reactome" id="R-RNO-416476">
    <property type="pathway name" value="G alpha (q) signalling events"/>
</dbReference>
<dbReference type="Reactome" id="R-RNO-416482">
    <property type="pathway name" value="G alpha (12/13) signalling events"/>
</dbReference>
<dbReference type="Reactome" id="R-RNO-428930">
    <property type="pathway name" value="Thromboxane signalling through TP receptor"/>
</dbReference>
<dbReference type="PRO" id="PR:P34978"/>
<dbReference type="Proteomes" id="UP000002494">
    <property type="component" value="Chromosome 7"/>
</dbReference>
<dbReference type="Bgee" id="ENSRNOG00000020585">
    <property type="expression patterns" value="Expressed in thymus and 19 other cell types or tissues"/>
</dbReference>
<dbReference type="GO" id="GO:0001669">
    <property type="term" value="C:acrosomal vesicle"/>
    <property type="evidence" value="ECO:0000314"/>
    <property type="project" value="RGD"/>
</dbReference>
<dbReference type="GO" id="GO:0016607">
    <property type="term" value="C:nuclear speck"/>
    <property type="evidence" value="ECO:0007669"/>
    <property type="project" value="Ensembl"/>
</dbReference>
<dbReference type="GO" id="GO:0005886">
    <property type="term" value="C:plasma membrane"/>
    <property type="evidence" value="ECO:0000318"/>
    <property type="project" value="GO_Central"/>
</dbReference>
<dbReference type="GO" id="GO:0004960">
    <property type="term" value="F:thromboxane receptor activity"/>
    <property type="evidence" value="ECO:0000314"/>
    <property type="project" value="RGD"/>
</dbReference>
<dbReference type="GO" id="GO:0007189">
    <property type="term" value="P:adenylate cyclase-activating G protein-coupled receptor signaling pathway"/>
    <property type="evidence" value="ECO:0000318"/>
    <property type="project" value="GO_Central"/>
</dbReference>
<dbReference type="GO" id="GO:0071222">
    <property type="term" value="P:cellular response to lipopolysaccharide"/>
    <property type="evidence" value="ECO:0000315"/>
    <property type="project" value="RGD"/>
</dbReference>
<dbReference type="GO" id="GO:0006954">
    <property type="term" value="P:inflammatory response"/>
    <property type="evidence" value="ECO:0000266"/>
    <property type="project" value="RGD"/>
</dbReference>
<dbReference type="GO" id="GO:0090051">
    <property type="term" value="P:negative regulation of cell migration involved in sprouting angiogenesis"/>
    <property type="evidence" value="ECO:0000266"/>
    <property type="project" value="RGD"/>
</dbReference>
<dbReference type="GO" id="GO:0045766">
    <property type="term" value="P:positive regulation of angiogenesis"/>
    <property type="evidence" value="ECO:0000314"/>
    <property type="project" value="RGD"/>
</dbReference>
<dbReference type="GO" id="GO:0030194">
    <property type="term" value="P:positive regulation of blood coagulation"/>
    <property type="evidence" value="ECO:0000315"/>
    <property type="project" value="RGD"/>
</dbReference>
<dbReference type="GO" id="GO:0045777">
    <property type="term" value="P:positive regulation of blood pressure"/>
    <property type="evidence" value="ECO:0000315"/>
    <property type="project" value="RGD"/>
</dbReference>
<dbReference type="GO" id="GO:0007204">
    <property type="term" value="P:positive regulation of cytosolic calcium ion concentration"/>
    <property type="evidence" value="ECO:0000314"/>
    <property type="project" value="RGD"/>
</dbReference>
<dbReference type="GO" id="GO:0045987">
    <property type="term" value="P:positive regulation of smooth muscle contraction"/>
    <property type="evidence" value="ECO:0000266"/>
    <property type="project" value="RGD"/>
</dbReference>
<dbReference type="GO" id="GO:0045907">
    <property type="term" value="P:positive regulation of vasoconstriction"/>
    <property type="evidence" value="ECO:0000315"/>
    <property type="project" value="RGD"/>
</dbReference>
<dbReference type="GO" id="GO:0019229">
    <property type="term" value="P:regulation of vasoconstriction"/>
    <property type="evidence" value="ECO:0000266"/>
    <property type="project" value="RGD"/>
</dbReference>
<dbReference type="GO" id="GO:0045471">
    <property type="term" value="P:response to ethanol"/>
    <property type="evidence" value="ECO:0000270"/>
    <property type="project" value="RGD"/>
</dbReference>
<dbReference type="GO" id="GO:0032496">
    <property type="term" value="P:response to lipopolysaccharide"/>
    <property type="evidence" value="ECO:0000266"/>
    <property type="project" value="RGD"/>
</dbReference>
<dbReference type="GO" id="GO:0007584">
    <property type="term" value="P:response to nutrient"/>
    <property type="evidence" value="ECO:0000270"/>
    <property type="project" value="RGD"/>
</dbReference>
<dbReference type="GO" id="GO:0033574">
    <property type="term" value="P:response to testosterone"/>
    <property type="evidence" value="ECO:0000270"/>
    <property type="project" value="RGD"/>
</dbReference>
<dbReference type="GO" id="GO:0009410">
    <property type="term" value="P:response to xenobiotic stimulus"/>
    <property type="evidence" value="ECO:0000270"/>
    <property type="project" value="RGD"/>
</dbReference>
<dbReference type="GO" id="GO:0006939">
    <property type="term" value="P:smooth muscle contraction"/>
    <property type="evidence" value="ECO:0000266"/>
    <property type="project" value="RGD"/>
</dbReference>
<dbReference type="FunFam" id="1.20.1070.10:FF:000163">
    <property type="entry name" value="Thromboxane A2 receptor"/>
    <property type="match status" value="1"/>
</dbReference>
<dbReference type="Gene3D" id="1.20.1070.10">
    <property type="entry name" value="Rhodopsin 7-helix transmembrane proteins"/>
    <property type="match status" value="1"/>
</dbReference>
<dbReference type="InterPro" id="IPR000276">
    <property type="entry name" value="GPCR_Rhodpsn"/>
</dbReference>
<dbReference type="InterPro" id="IPR017452">
    <property type="entry name" value="GPCR_Rhodpsn_7TM"/>
</dbReference>
<dbReference type="InterPro" id="IPR008365">
    <property type="entry name" value="Prostanoid_rcpt"/>
</dbReference>
<dbReference type="InterPro" id="IPR001105">
    <property type="entry name" value="Thbox_rcpt"/>
</dbReference>
<dbReference type="PANTHER" id="PTHR11866">
    <property type="entry name" value="G-PROTEIN COUPLED RECEPTOR FAMILY 1 MEMBER"/>
    <property type="match status" value="1"/>
</dbReference>
<dbReference type="PANTHER" id="PTHR11866:SF5">
    <property type="entry name" value="THROMBOXANE A2 RECEPTOR"/>
    <property type="match status" value="1"/>
</dbReference>
<dbReference type="Pfam" id="PF00001">
    <property type="entry name" value="7tm_1"/>
    <property type="match status" value="1"/>
</dbReference>
<dbReference type="PRINTS" id="PR01788">
    <property type="entry name" value="PROSTANOIDR"/>
</dbReference>
<dbReference type="PRINTS" id="PR00429">
    <property type="entry name" value="THROMBOXANER"/>
</dbReference>
<dbReference type="SUPFAM" id="SSF81321">
    <property type="entry name" value="Family A G protein-coupled receptor-like"/>
    <property type="match status" value="1"/>
</dbReference>
<dbReference type="PROSITE" id="PS00237">
    <property type="entry name" value="G_PROTEIN_RECEP_F1_1"/>
    <property type="match status" value="1"/>
</dbReference>
<dbReference type="PROSITE" id="PS50262">
    <property type="entry name" value="G_PROTEIN_RECEP_F1_2"/>
    <property type="match status" value="1"/>
</dbReference>
<organism>
    <name type="scientific">Rattus norvegicus</name>
    <name type="common">Rat</name>
    <dbReference type="NCBI Taxonomy" id="10116"/>
    <lineage>
        <taxon>Eukaryota</taxon>
        <taxon>Metazoa</taxon>
        <taxon>Chordata</taxon>
        <taxon>Craniata</taxon>
        <taxon>Vertebrata</taxon>
        <taxon>Euteleostomi</taxon>
        <taxon>Mammalia</taxon>
        <taxon>Eutheria</taxon>
        <taxon>Euarchontoglires</taxon>
        <taxon>Glires</taxon>
        <taxon>Rodentia</taxon>
        <taxon>Myomorpha</taxon>
        <taxon>Muroidea</taxon>
        <taxon>Muridae</taxon>
        <taxon>Murinae</taxon>
        <taxon>Rattus</taxon>
    </lineage>
</organism>
<comment type="function">
    <text>Receptor for thromboxane A2 (TXA2), a potent stimulator of platelet aggregation. The activity of this receptor is mediated by a G-protein that activates a phosphatidylinositol-calcium second messenger system. In the kidney, the binding of TXA2 to glomerular TP receptors causes intense vasoconstriction. Activates phospholipase C and adenylyl cyclase.</text>
</comment>
<comment type="subunit">
    <text evidence="1">Interacts with RPGRIP1L. Interacts with RACK1; the interaction regulates TBXA2R cell surface expression (By similarity).</text>
</comment>
<comment type="subcellular location">
    <subcellularLocation>
        <location>Cell membrane</location>
        <topology>Multi-pass membrane protein</topology>
    </subcellularLocation>
</comment>
<comment type="tissue specificity">
    <text>In the brain, expressed in all types of glial cells. In the kidney, expressed in the mesangial cells of the glomerulus, smooth muscle cells of the renal arterioles, and in transitional cell epithelium of renal pelvis.</text>
</comment>
<comment type="similarity">
    <text evidence="4">Belongs to the G-protein coupled receptor 1 family.</text>
</comment>
<feature type="chain" id="PRO_0000070140" description="Thromboxane A2 receptor">
    <location>
        <begin position="1"/>
        <end position="341"/>
    </location>
</feature>
<feature type="topological domain" description="Extracellular" evidence="3">
    <location>
        <begin position="1"/>
        <end position="29"/>
    </location>
</feature>
<feature type="transmembrane region" description="Helical; Name=1" evidence="3">
    <location>
        <begin position="30"/>
        <end position="52"/>
    </location>
</feature>
<feature type="topological domain" description="Cytoplasmic" evidence="3">
    <location>
        <begin position="53"/>
        <end position="65"/>
    </location>
</feature>
<feature type="transmembrane region" description="Helical; Name=2" evidence="3">
    <location>
        <begin position="66"/>
        <end position="86"/>
    </location>
</feature>
<feature type="topological domain" description="Extracellular" evidence="3">
    <location>
        <begin position="87"/>
        <end position="105"/>
    </location>
</feature>
<feature type="transmembrane region" description="Helical; Name=3" evidence="3">
    <location>
        <begin position="106"/>
        <end position="127"/>
    </location>
</feature>
<feature type="topological domain" description="Cytoplasmic" evidence="3">
    <location>
        <begin position="128"/>
        <end position="147"/>
    </location>
</feature>
<feature type="transmembrane region" description="Helical; Name=4" evidence="3">
    <location>
        <begin position="148"/>
        <end position="170"/>
    </location>
</feature>
<feature type="topological domain" description="Extracellular" evidence="3">
    <location>
        <begin position="171"/>
        <end position="191"/>
    </location>
</feature>
<feature type="transmembrane region" description="Helical; Name=5" evidence="3">
    <location>
        <begin position="192"/>
        <end position="217"/>
    </location>
</feature>
<feature type="topological domain" description="Cytoplasmic" evidence="3">
    <location>
        <begin position="218"/>
        <end position="244"/>
    </location>
</feature>
<feature type="transmembrane region" description="Helical; Name=6" evidence="3">
    <location>
        <begin position="245"/>
        <end position="268"/>
    </location>
</feature>
<feature type="topological domain" description="Extracellular" evidence="3">
    <location>
        <begin position="269"/>
        <end position="287"/>
    </location>
</feature>
<feature type="transmembrane region" description="Helical; Name=7" evidence="3">
    <location>
        <begin position="288"/>
        <end position="309"/>
    </location>
</feature>
<feature type="topological domain" description="Cytoplasmic" evidence="3">
    <location>
        <begin position="310"/>
        <end position="341"/>
    </location>
</feature>
<feature type="modified residue" description="Phosphoserine" evidence="2">
    <location>
        <position position="328"/>
    </location>
</feature>
<feature type="glycosylation site" description="N-linked (GlcNAc...) asparagine" evidence="3">
    <location>
        <position position="4"/>
    </location>
</feature>
<feature type="glycosylation site" description="N-linked (GlcNAc...) asparagine" evidence="3">
    <location>
        <position position="16"/>
    </location>
</feature>
<feature type="disulfide bond" evidence="4">
    <location>
        <begin position="104"/>
        <end position="181"/>
    </location>
</feature>
<feature type="sequence conflict" description="In Ref. 2; BAA06844." evidence="5" ref="2">
    <original>E</original>
    <variation>G</variation>
    <location>
        <position position="188"/>
    </location>
</feature>
<proteinExistence type="evidence at transcript level"/>
<reference key="1">
    <citation type="journal article" date="1995" name="J. Clin. Invest.">
        <title>Rat kidney thromboxane receptor: molecular cloning, signal transduction, and intrarenal expression localization.</title>
        <authorList>
            <person name="Abe T."/>
            <person name="Takeuchi K."/>
            <person name="Takahashi N."/>
            <person name="Tsutsumi E."/>
            <person name="Taniyama Y."/>
            <person name="Abe K."/>
        </authorList>
    </citation>
    <scope>NUCLEOTIDE SEQUENCE [MRNA]</scope>
    <source>
        <strain>Sprague-Dawley</strain>
        <tissue>Kidney</tissue>
    </source>
</reference>
<reference key="2">
    <citation type="journal article" date="1995" name="Biochim. Biophys. Acta">
        <title>cDNA cloning of a thromboxane A2 receptor from rat astrocytes.</title>
        <authorList>
            <person name="Kitanaka J."/>
            <person name="Hashimoto H."/>
            <person name="Sugimoto Y."/>
            <person name="Sawada M."/>
            <person name="Negishi M."/>
            <person name="Suzumura A."/>
            <person name="Marunouchi T."/>
            <person name="Ichikawa A."/>
            <person name="Baba A."/>
        </authorList>
    </citation>
    <scope>NUCLEOTIDE SEQUENCE [MRNA]</scope>
    <source>
        <strain>Sprague-Dawley</strain>
        <tissue>Brain</tissue>
    </source>
</reference>
<reference key="3">
    <citation type="journal article" date="1996" name="Prostaglandins">
        <title>Characterization of a rat kidney thromboxane A2 receptor: high affinity for the agonist ligand I-BOP.</title>
        <authorList>
            <person name="D'Angelo D.D."/>
            <person name="Terasawa T."/>
            <person name="Carlisle S.J."/>
            <person name="Dorn G.W. II"/>
            <person name="Lynch K.R."/>
        </authorList>
    </citation>
    <scope>NUCLEOTIDE SEQUENCE [MRNA]</scope>
    <source>
        <strain>Sprague-Dawley</strain>
        <tissue>Kidney</tissue>
    </source>
</reference>
<protein>
    <recommendedName>
        <fullName>Thromboxane A2 receptor</fullName>
        <shortName>TXA2-R</shortName>
    </recommendedName>
    <alternativeName>
        <fullName>Prostanoid TP receptor</fullName>
    </alternativeName>
    <alternativeName>
        <fullName>TXR2</fullName>
    </alternativeName>
</protein>
<evidence type="ECO:0000250" key="1"/>
<evidence type="ECO:0000250" key="2">
    <source>
        <dbReference type="UniProtKB" id="P30987"/>
    </source>
</evidence>
<evidence type="ECO:0000255" key="3"/>
<evidence type="ECO:0000255" key="4">
    <source>
        <dbReference type="PROSITE-ProRule" id="PRU00521"/>
    </source>
</evidence>
<evidence type="ECO:0000305" key="5"/>
<gene>
    <name type="primary">Tbxa2r</name>
</gene>
<sequence>MWLNSTSLGACFRPVNITLQERRAIASPWFAASFCALGLGSNLLALSVLAGARPGAGPRSSFLALLCGLVLTDFLGLLVTGAVVASQHAALLDWRATDPGCRLCHFMGAAMVFFGLCPLLLGAAMAAERFVGITRPFSRPAATSRRAWATVGLVWVGAGTLGLLPLLGLGRYSVQYPGSWCFLTLGAERGDVAFGLMFALLGSVSVGLSLLLNTVSVATLCRVYHAREATQRPRDCEVEMMVQLVGIMVVATVCWMPLLVFILQTLLQTLPVMSPSGQLLRTTERQLLIYLRVATWNQILDPWVYILFRRSVLRRLHPRFTSQLQAVSLHSPPTQAMLSGP</sequence>